<sequence length="380" mass="40737">MMFSGFNADYEASSSRCSSASPAGDSLSYYHSPADSFSSMGSPVNAQDYCTDLAVSSANFIPTVTAISTSPDLQWLVQPTLVSSVAPSQTRAPHPYGVPTPSAGAYSRAGVMKTMTGGRAQSIGRRGKVEQLSPEEEEKRRIRRERNKMAAAKCRNRRRELTDTLQAETDQLEDEKSALQTEIANLLKEKEKLEFILAAHRPACKIPDDLGFPEEMSVASLDLSGGLPEAATPESEEAFTLPLLNDPEPKPSVEPVKSVGSMELKAEPFDDYMFPASSRPSGSETARSVPDMDLSGSFYAADWEPLHGGSLGMGPMATELEPLCTPVVTCTPSCTTYTSSFVFTYPEADSFPSCAAAHRKGSSSNEPSSDSLSSPTLLAL</sequence>
<evidence type="ECO:0000250" key="1"/>
<evidence type="ECO:0000250" key="2">
    <source>
        <dbReference type="UniProtKB" id="P01100"/>
    </source>
</evidence>
<evidence type="ECO:0000250" key="3">
    <source>
        <dbReference type="UniProtKB" id="P01101"/>
    </source>
</evidence>
<evidence type="ECO:0000250" key="4">
    <source>
        <dbReference type="UniProtKB" id="P12841"/>
    </source>
</evidence>
<evidence type="ECO:0000255" key="5">
    <source>
        <dbReference type="PROSITE-ProRule" id="PRU00978"/>
    </source>
</evidence>
<evidence type="ECO:0000256" key="6">
    <source>
        <dbReference type="SAM" id="MobiDB-lite"/>
    </source>
</evidence>
<evidence type="ECO:0000305" key="7"/>
<feature type="chain" id="PRO_0000076462" description="Protein c-Fos">
    <location>
        <begin position="1"/>
        <end position="380"/>
    </location>
</feature>
<feature type="domain" description="bZIP" evidence="5">
    <location>
        <begin position="137"/>
        <end position="200"/>
    </location>
</feature>
<feature type="region of interest" description="Disordered" evidence="6">
    <location>
        <begin position="119"/>
        <end position="138"/>
    </location>
</feature>
<feature type="region of interest" description="Basic motif; required for the activation of phospholipid synthesis, but not for CDS1-binding" evidence="5">
    <location>
        <begin position="139"/>
        <end position="159"/>
    </location>
</feature>
<feature type="region of interest" description="Leucine-zipper" evidence="5">
    <location>
        <begin position="165"/>
        <end position="193"/>
    </location>
</feature>
<feature type="region of interest" description="Disordered" evidence="6">
    <location>
        <begin position="354"/>
        <end position="380"/>
    </location>
</feature>
<feature type="compositionally biased region" description="Low complexity" evidence="6">
    <location>
        <begin position="362"/>
        <end position="374"/>
    </location>
</feature>
<feature type="modified residue" description="Phosphotyrosine; by SRC" evidence="2">
    <location>
        <position position="10"/>
    </location>
</feature>
<feature type="modified residue" description="Phosphotyrosine; by SRC" evidence="2">
    <location>
        <position position="30"/>
    </location>
</feature>
<feature type="modified residue" description="Phosphothreonine" evidence="3">
    <location>
        <position position="232"/>
    </location>
</feature>
<feature type="modified residue" description="Phosphothreonine; by MAPK1 and MAPK3" evidence="2">
    <location>
        <position position="325"/>
    </location>
</feature>
<feature type="modified residue" description="Phosphothreonine; by MAPK1 and MAPK3" evidence="2">
    <location>
        <position position="331"/>
    </location>
</feature>
<feature type="modified residue" description="Phosphoserine; by MAPK1, MAPK3 and RPS6KA3" evidence="2">
    <location>
        <position position="362"/>
    </location>
</feature>
<feature type="modified residue" description="Phosphoserine; by MAPK1 and MAPK3" evidence="2">
    <location>
        <position position="374"/>
    </location>
</feature>
<feature type="cross-link" description="Glycyl lysine isopeptide (Lys-Gly) (interchain with G-Cter in SUMO2)" evidence="2">
    <location>
        <position position="113"/>
    </location>
</feature>
<feature type="cross-link" description="Glycyl lysine isopeptide (Lys-Gly) (interchain with G-Cter in SUMO2)" evidence="2">
    <location>
        <position position="128"/>
    </location>
</feature>
<feature type="cross-link" description="Glycyl lysine isopeptide (Lys-Gly) (interchain with G-Cter in SUMO); alternate" evidence="1">
    <location>
        <position position="265"/>
    </location>
</feature>
<feature type="cross-link" description="Glycyl lysine isopeptide (Lys-Gly) (interchain with G-Cter in SUMO2); alternate" evidence="2">
    <location>
        <position position="265"/>
    </location>
</feature>
<feature type="sequence conflict" description="In Ref. 4; AAC21577." evidence="7" ref="4">
    <original>P</original>
    <variation>L</variation>
    <location>
        <position position="268"/>
    </location>
</feature>
<gene>
    <name type="primary">FOS</name>
</gene>
<reference key="1">
    <citation type="submission" date="2003-06" db="EMBL/GenBank/DDBJ databases">
        <title>Characterization of c-Fos proto-oncogene in Korean native cattle (Hanwoo).</title>
        <authorList>
            <person name="Yu S.L."/>
            <person name="Chung H.J."/>
            <person name="Jung K.C."/>
            <person name="Choi J.G."/>
            <person name="Na K.J."/>
            <person name="Lee J.H."/>
            <person name="Sang B.C."/>
        </authorList>
    </citation>
    <scope>NUCLEOTIDE SEQUENCE [MRNA]</scope>
</reference>
<reference key="2">
    <citation type="journal article" date="2005" name="BMC Genomics">
        <title>Characterization of 954 bovine full-CDS cDNA sequences.</title>
        <authorList>
            <person name="Harhay G.P."/>
            <person name="Sonstegard T.S."/>
            <person name="Keele J.W."/>
            <person name="Heaton M.P."/>
            <person name="Clawson M.L."/>
            <person name="Snelling W.M."/>
            <person name="Wiedmann R.T."/>
            <person name="Van Tassell C.P."/>
            <person name="Smith T.P.L."/>
        </authorList>
    </citation>
    <scope>NUCLEOTIDE SEQUENCE [LARGE SCALE MRNA]</scope>
</reference>
<reference key="3">
    <citation type="submission" date="2006-06" db="EMBL/GenBank/DDBJ databases">
        <authorList>
            <consortium name="NIH - Mammalian Gene Collection (MGC) project"/>
        </authorList>
    </citation>
    <scope>NUCLEOTIDE SEQUENCE [LARGE SCALE MRNA]</scope>
    <source>
        <strain>Hereford</strain>
        <tissue>Fetal skin</tissue>
    </source>
</reference>
<reference key="4">
    <citation type="submission" date="1998-06" db="EMBL/GenBank/DDBJ databases">
        <title>Stimulation of c-fos and c-jun mRNA in bovine luteal cells.</title>
        <authorList>
            <person name="Davis J.S."/>
            <person name="Fong H.W."/>
            <person name="Westfall S.W."/>
        </authorList>
    </citation>
    <scope>NUCLEOTIDE SEQUENCE [MRNA] OF 165-290</scope>
    <source>
        <tissue>Brain</tissue>
    </source>
</reference>
<comment type="function">
    <text evidence="1">Nuclear phosphoprotein which forms a tight but non-covalently linked complex with the JUN/AP-1 transcription factor. On TGF-beta activation, forms a multimeric SMAD3/SMAD4/JUN/FOS complex, at the AP1/SMAD-binding site to regulate TGF-beta-mediated signaling. Has a critical function in regulating the development of cells destined to form and maintain the skeleton. It is thought to have an important role in signal transduction, cell proliferation and differentiation (By similarity). In growing cells, activates phospholipid synthesis, possibly by activating CDS1 and PI4K2A. This activity requires Tyr-dephosphorylation and association with the endoplasmic reticulum (By similarity).</text>
</comment>
<comment type="subunit">
    <text evidence="2 3 4">Heterodimer; with JUN (By similarity). Component of the SMAD3/SMAD4/JUN/FOS complex required for synergistic TGF-beta-mediated transcription at the AP1-binding site (By similarity). Interacts with SMAD3; the interaction is weak even on TGF-beta activation (By similarity). Interacts with MAFB (By similarity). Interacts with TSC22D3 (via N-terminus); this interaction inhibits the binding of active AP1 to its target DNA (By similarity). Interacts with CDS1 and PI4K2A (By similarity). Interacts (via bZIP domain and leucine-zipper region) with the multiprotein chromatin-remodeling complexes SWI/SNF: SWI/SNF-A (BAF) subunits SMARCB1, SMARCC2 and SMARCD1 (By similarity). Interacts (via bZIP domain and leucine-zipper region) with ARID1A (By similarity).</text>
</comment>
<comment type="subcellular location">
    <subcellularLocation>
        <location evidence="5">Nucleus</location>
    </subcellularLocation>
    <subcellularLocation>
        <location evidence="1">Endoplasmic reticulum</location>
    </subcellularLocation>
    <subcellularLocation>
        <location evidence="1">Cytoplasm</location>
        <location evidence="1">Cytosol</location>
    </subcellularLocation>
    <text evidence="1">In quiescent cells, present in very small amounts in the cytosol. Following induction of cell growth, first localizes to the endoplasmic reticulum and only later to the nucleus. Localization at the endoplasmic reticulum requires dephosphorylation at Tyr-10 and Tyr-30 (By similarity).</text>
</comment>
<comment type="PTM">
    <text evidence="1">Phosphorylated in the C-terminal upon stimulation by nerve growth factor (NGF) and epidermal growth factor (EGF). Phosphorylated, in vitro, by MAPK and RSK1. Phosphorylation on both Ser-362 and Ser-374 by MAPK1/2 and RSK1/2 leads to protein stabilization with phosphorylation on Ser-374 being the major site for protein stabilization on NGF stimulation. Phosphorylation on Ser-362 and Ser-374 primes further phosphorylations on Thr-325 and Thr-331 through promoting docking of MAPK to the DEF domain. Phosphorylation on Thr-232, induced by HA-RAS, activates the transcriptional activity and antagonizes sumoylation. Phosphorylation on Ser-362 by RSK2 in osteoblasts contributes to osteoblast transformation (By similarity).</text>
</comment>
<comment type="PTM">
    <text evidence="1">Constitutively sumoylated with SUMO1, SUMO2 and SUMO3. Desumoylated by SENP2. Sumoylation requires heterodimerization with JUN and is enhanced by mitogen stimulation. Sumoylation inhibits the AP-1 transcriptional activity and is, itself, inhibited by Ras-activated phosphorylation on Thr-232 (By similarity).</text>
</comment>
<comment type="PTM">
    <text evidence="1">In quiescent cells, the small amount of FOS present is phosphorylated at Tyr-10 and Tyr-30 by SRC. This Tyr-phosphorylated form is cytosolic. In growing cells, dephosphorylated by PTPN2. Dephosphorylation leads to the association with endoplasmic reticulum membranes and activation of phospholipid synthesis (By similarity).</text>
</comment>
<comment type="similarity">
    <text evidence="7">Belongs to the bZIP family. Fos subfamily.</text>
</comment>
<name>FOS_BOVIN</name>
<dbReference type="EMBL" id="AY322482">
    <property type="protein sequence ID" value="AAP84343.1"/>
    <property type="molecule type" value="mRNA"/>
</dbReference>
<dbReference type="EMBL" id="BT029837">
    <property type="protein sequence ID" value="ABM21549.1"/>
    <property type="molecule type" value="mRNA"/>
</dbReference>
<dbReference type="EMBL" id="BC118280">
    <property type="protein sequence ID" value="AAI18281.1"/>
    <property type="molecule type" value="mRNA"/>
</dbReference>
<dbReference type="EMBL" id="AF069515">
    <property type="protein sequence ID" value="AAC21577.1"/>
    <property type="molecule type" value="mRNA"/>
</dbReference>
<dbReference type="RefSeq" id="NP_877587.1">
    <property type="nucleotide sequence ID" value="NM_182786.2"/>
</dbReference>
<dbReference type="SMR" id="O77628"/>
<dbReference type="FunCoup" id="O77628">
    <property type="interactions" value="1003"/>
</dbReference>
<dbReference type="STRING" id="9913.ENSBTAP00000005660"/>
<dbReference type="PaxDb" id="9913-ENSBTAP00000005660"/>
<dbReference type="Ensembl" id="ENSBTAT00000005660.7">
    <property type="protein sequence ID" value="ENSBTAP00000005660.5"/>
    <property type="gene ID" value="ENSBTAG00000004322.7"/>
</dbReference>
<dbReference type="GeneID" id="280795"/>
<dbReference type="KEGG" id="bta:280795"/>
<dbReference type="CTD" id="2353"/>
<dbReference type="VEuPathDB" id="HostDB:ENSBTAG00000004322"/>
<dbReference type="VGNC" id="VGNC:29073">
    <property type="gene designation" value="FOS"/>
</dbReference>
<dbReference type="eggNOG" id="KOG1414">
    <property type="taxonomic scope" value="Eukaryota"/>
</dbReference>
<dbReference type="GeneTree" id="ENSGT00940000159276"/>
<dbReference type="HOGENOM" id="CLU_049742_2_0_1"/>
<dbReference type="InParanoid" id="O77628"/>
<dbReference type="OMA" id="NRTHPYG"/>
<dbReference type="OrthoDB" id="5866312at2759"/>
<dbReference type="TreeFam" id="TF326301"/>
<dbReference type="Reactome" id="R-BTA-2559580">
    <property type="pathway name" value="Oxidative Stress Induced Senescence"/>
</dbReference>
<dbReference type="Reactome" id="R-BTA-2871796">
    <property type="pathway name" value="FCERI mediated MAPK activation"/>
</dbReference>
<dbReference type="Reactome" id="R-BTA-450341">
    <property type="pathway name" value="Activation of the AP-1 family of transcription factors"/>
</dbReference>
<dbReference type="Proteomes" id="UP000009136">
    <property type="component" value="Chromosome 10"/>
</dbReference>
<dbReference type="Bgee" id="ENSBTAG00000004322">
    <property type="expression patterns" value="Expressed in ureter and 110 other cell types or tissues"/>
</dbReference>
<dbReference type="GO" id="GO:0005829">
    <property type="term" value="C:cytosol"/>
    <property type="evidence" value="ECO:0007669"/>
    <property type="project" value="UniProtKB-SubCell"/>
</dbReference>
<dbReference type="GO" id="GO:0005783">
    <property type="term" value="C:endoplasmic reticulum"/>
    <property type="evidence" value="ECO:0007669"/>
    <property type="project" value="UniProtKB-SubCell"/>
</dbReference>
<dbReference type="GO" id="GO:0005654">
    <property type="term" value="C:nucleoplasm"/>
    <property type="evidence" value="ECO:0007669"/>
    <property type="project" value="Ensembl"/>
</dbReference>
<dbReference type="GO" id="GO:0005634">
    <property type="term" value="C:nucleus"/>
    <property type="evidence" value="ECO:0000250"/>
    <property type="project" value="AgBase"/>
</dbReference>
<dbReference type="GO" id="GO:0032993">
    <property type="term" value="C:protein-DNA complex"/>
    <property type="evidence" value="ECO:0007669"/>
    <property type="project" value="Ensembl"/>
</dbReference>
<dbReference type="GO" id="GO:0035976">
    <property type="term" value="C:transcription factor AP-1 complex"/>
    <property type="evidence" value="ECO:0007669"/>
    <property type="project" value="Ensembl"/>
</dbReference>
<dbReference type="GO" id="GO:0005667">
    <property type="term" value="C:transcription regulator complex"/>
    <property type="evidence" value="ECO:0000250"/>
    <property type="project" value="AgBase"/>
</dbReference>
<dbReference type="GO" id="GO:0003682">
    <property type="term" value="F:chromatin binding"/>
    <property type="evidence" value="ECO:0007669"/>
    <property type="project" value="Ensembl"/>
</dbReference>
<dbReference type="GO" id="GO:0003677">
    <property type="term" value="F:DNA binding"/>
    <property type="evidence" value="ECO:0000250"/>
    <property type="project" value="AgBase"/>
</dbReference>
<dbReference type="GO" id="GO:0001228">
    <property type="term" value="F:DNA-binding transcription activator activity, RNA polymerase II-specific"/>
    <property type="evidence" value="ECO:0007669"/>
    <property type="project" value="Ensembl"/>
</dbReference>
<dbReference type="GO" id="GO:0003700">
    <property type="term" value="F:DNA-binding transcription factor activity"/>
    <property type="evidence" value="ECO:0000250"/>
    <property type="project" value="AgBase"/>
</dbReference>
<dbReference type="GO" id="GO:0000981">
    <property type="term" value="F:DNA-binding transcription factor activity, RNA polymerase II-specific"/>
    <property type="evidence" value="ECO:0000318"/>
    <property type="project" value="GO_Central"/>
</dbReference>
<dbReference type="GO" id="GO:0003690">
    <property type="term" value="F:double-stranded DNA binding"/>
    <property type="evidence" value="ECO:0000250"/>
    <property type="project" value="AgBase"/>
</dbReference>
<dbReference type="GO" id="GO:0042802">
    <property type="term" value="F:identical protein binding"/>
    <property type="evidence" value="ECO:0007669"/>
    <property type="project" value="Ensembl"/>
</dbReference>
<dbReference type="GO" id="GO:0046982">
    <property type="term" value="F:protein heterodimerization activity"/>
    <property type="evidence" value="ECO:0000250"/>
    <property type="project" value="AgBase"/>
</dbReference>
<dbReference type="GO" id="GO:0070412">
    <property type="term" value="F:R-SMAD binding"/>
    <property type="evidence" value="ECO:0007669"/>
    <property type="project" value="Ensembl"/>
</dbReference>
<dbReference type="GO" id="GO:0000978">
    <property type="term" value="F:RNA polymerase II cis-regulatory region sequence-specific DNA binding"/>
    <property type="evidence" value="ECO:0000318"/>
    <property type="project" value="GO_Central"/>
</dbReference>
<dbReference type="GO" id="GO:0000979">
    <property type="term" value="F:RNA polymerase II core promoter sequence-specific DNA binding"/>
    <property type="evidence" value="ECO:0007669"/>
    <property type="project" value="Ensembl"/>
</dbReference>
<dbReference type="GO" id="GO:0061629">
    <property type="term" value="F:RNA polymerase II-specific DNA-binding transcription factor binding"/>
    <property type="evidence" value="ECO:0007669"/>
    <property type="project" value="Ensembl"/>
</dbReference>
<dbReference type="GO" id="GO:0001221">
    <property type="term" value="F:transcription coregulator binding"/>
    <property type="evidence" value="ECO:0007669"/>
    <property type="project" value="Ensembl"/>
</dbReference>
<dbReference type="GO" id="GO:0071277">
    <property type="term" value="P:cellular response to calcium ion"/>
    <property type="evidence" value="ECO:0007669"/>
    <property type="project" value="Ensembl"/>
</dbReference>
<dbReference type="GO" id="GO:0034614">
    <property type="term" value="P:cellular response to reactive oxygen species"/>
    <property type="evidence" value="ECO:0007669"/>
    <property type="project" value="Ensembl"/>
</dbReference>
<dbReference type="GO" id="GO:0007399">
    <property type="term" value="P:nervous system development"/>
    <property type="evidence" value="ECO:0000250"/>
    <property type="project" value="AgBase"/>
</dbReference>
<dbReference type="GO" id="GO:0030316">
    <property type="term" value="P:osteoclast differentiation"/>
    <property type="evidence" value="ECO:0007669"/>
    <property type="project" value="Ensembl"/>
</dbReference>
<dbReference type="GO" id="GO:1902895">
    <property type="term" value="P:positive regulation of miRNA transcription"/>
    <property type="evidence" value="ECO:0007669"/>
    <property type="project" value="Ensembl"/>
</dbReference>
<dbReference type="GO" id="GO:0045672">
    <property type="term" value="P:positive regulation of osteoclast differentiation"/>
    <property type="evidence" value="ECO:0007669"/>
    <property type="project" value="Ensembl"/>
</dbReference>
<dbReference type="GO" id="GO:0006355">
    <property type="term" value="P:regulation of DNA-templated transcription"/>
    <property type="evidence" value="ECO:0000250"/>
    <property type="project" value="AgBase"/>
</dbReference>
<dbReference type="GO" id="GO:0006357">
    <property type="term" value="P:regulation of transcription by RNA polymerase II"/>
    <property type="evidence" value="ECO:0000318"/>
    <property type="project" value="GO_Central"/>
</dbReference>
<dbReference type="GO" id="GO:0035994">
    <property type="term" value="P:response to muscle stretch"/>
    <property type="evidence" value="ECO:0007669"/>
    <property type="project" value="Ensembl"/>
</dbReference>
<dbReference type="GO" id="GO:0009410">
    <property type="term" value="P:response to xenobiotic stimulus"/>
    <property type="evidence" value="ECO:0007669"/>
    <property type="project" value="Ensembl"/>
</dbReference>
<dbReference type="GO" id="GO:0035914">
    <property type="term" value="P:skeletal muscle cell differentiation"/>
    <property type="evidence" value="ECO:0007669"/>
    <property type="project" value="Ensembl"/>
</dbReference>
<dbReference type="GO" id="GO:0060395">
    <property type="term" value="P:SMAD protein signal transduction"/>
    <property type="evidence" value="ECO:0007669"/>
    <property type="project" value="Ensembl"/>
</dbReference>
<dbReference type="GO" id="GO:0006366">
    <property type="term" value="P:transcription by RNA polymerase II"/>
    <property type="evidence" value="ECO:0007669"/>
    <property type="project" value="Ensembl"/>
</dbReference>
<dbReference type="GO" id="GO:0007179">
    <property type="term" value="P:transforming growth factor beta receptor signaling pathway"/>
    <property type="evidence" value="ECO:0007669"/>
    <property type="project" value="Ensembl"/>
</dbReference>
<dbReference type="CDD" id="cd14721">
    <property type="entry name" value="bZIP_Fos"/>
    <property type="match status" value="1"/>
</dbReference>
<dbReference type="FunFam" id="1.20.5.170:FF:000006">
    <property type="entry name" value="fos-related antigen 2 isoform X1"/>
    <property type="match status" value="1"/>
</dbReference>
<dbReference type="Gene3D" id="1.20.5.170">
    <property type="match status" value="1"/>
</dbReference>
<dbReference type="InterPro" id="IPR000837">
    <property type="entry name" value="AP-1"/>
</dbReference>
<dbReference type="InterPro" id="IPR004827">
    <property type="entry name" value="bZIP"/>
</dbReference>
<dbReference type="InterPro" id="IPR046347">
    <property type="entry name" value="bZIP_sf"/>
</dbReference>
<dbReference type="PANTHER" id="PTHR23351">
    <property type="entry name" value="FOS TRANSCRIPTION FACTOR-RELATED"/>
    <property type="match status" value="1"/>
</dbReference>
<dbReference type="PANTHER" id="PTHR23351:SF4">
    <property type="entry name" value="PROTEIN C-FOS"/>
    <property type="match status" value="1"/>
</dbReference>
<dbReference type="Pfam" id="PF00170">
    <property type="entry name" value="bZIP_1"/>
    <property type="match status" value="1"/>
</dbReference>
<dbReference type="PRINTS" id="PR00042">
    <property type="entry name" value="LEUZIPPRFOS"/>
</dbReference>
<dbReference type="SMART" id="SM00338">
    <property type="entry name" value="BRLZ"/>
    <property type="match status" value="1"/>
</dbReference>
<dbReference type="SUPFAM" id="SSF57959">
    <property type="entry name" value="Leucine zipper domain"/>
    <property type="match status" value="1"/>
</dbReference>
<dbReference type="PROSITE" id="PS50217">
    <property type="entry name" value="BZIP"/>
    <property type="match status" value="1"/>
</dbReference>
<dbReference type="PROSITE" id="PS00036">
    <property type="entry name" value="BZIP_BASIC"/>
    <property type="match status" value="1"/>
</dbReference>
<protein>
    <recommendedName>
        <fullName evidence="7">Protein c-Fos</fullName>
    </recommendedName>
    <alternativeName>
        <fullName>Cellular oncogene fos</fullName>
    </alternativeName>
    <alternativeName>
        <fullName evidence="7">Transcription factor AP-1 subunit c-Fos</fullName>
    </alternativeName>
</protein>
<organism>
    <name type="scientific">Bos taurus</name>
    <name type="common">Bovine</name>
    <dbReference type="NCBI Taxonomy" id="9913"/>
    <lineage>
        <taxon>Eukaryota</taxon>
        <taxon>Metazoa</taxon>
        <taxon>Chordata</taxon>
        <taxon>Craniata</taxon>
        <taxon>Vertebrata</taxon>
        <taxon>Euteleostomi</taxon>
        <taxon>Mammalia</taxon>
        <taxon>Eutheria</taxon>
        <taxon>Laurasiatheria</taxon>
        <taxon>Artiodactyla</taxon>
        <taxon>Ruminantia</taxon>
        <taxon>Pecora</taxon>
        <taxon>Bovidae</taxon>
        <taxon>Bovinae</taxon>
        <taxon>Bos</taxon>
    </lineage>
</organism>
<accession>O77628</accession>
<accession>A1L550</accession>
<accession>Q17QM0</accession>
<accession>Q7YRP7</accession>
<keyword id="KW-0963">Cytoplasm</keyword>
<keyword id="KW-0238">DNA-binding</keyword>
<keyword id="KW-0256">Endoplasmic reticulum</keyword>
<keyword id="KW-1017">Isopeptide bond</keyword>
<keyword id="KW-0539">Nucleus</keyword>
<keyword id="KW-0597">Phosphoprotein</keyword>
<keyword id="KW-0656">Proto-oncogene</keyword>
<keyword id="KW-1185">Reference proteome</keyword>
<keyword id="KW-0832">Ubl conjugation</keyword>
<proteinExistence type="evidence at transcript level"/>